<feature type="chain" id="PRO_0000385452" description="Alkaline phosphatase">
    <location>
        <begin position="1"/>
        <end position="20" status="greater than"/>
    </location>
</feature>
<feature type="non-terminal residue" evidence="2">
    <location>
        <position position="20"/>
    </location>
</feature>
<protein>
    <recommendedName>
        <fullName evidence="2">Alkaline phosphatase</fullName>
        <ecNumber>3.1.3.1</ecNumber>
    </recommendedName>
</protein>
<sequence length="20" mass="1975">DINGGGATLPQALYQTSGVL</sequence>
<keyword id="KW-0903">Direct protein sequencing</keyword>
<keyword id="KW-1200">Hemorrhagic toxin</keyword>
<keyword id="KW-1199">Hemostasis impairing toxin</keyword>
<keyword id="KW-0378">Hydrolase</keyword>
<keyword id="KW-0964">Secreted</keyword>
<keyword id="KW-0800">Toxin</keyword>
<accession>P86348</accession>
<dbReference type="EC" id="3.1.3.1"/>
<dbReference type="GO" id="GO:0005576">
    <property type="term" value="C:extracellular region"/>
    <property type="evidence" value="ECO:0007669"/>
    <property type="project" value="UniProtKB-SubCell"/>
</dbReference>
<dbReference type="GO" id="GO:0004035">
    <property type="term" value="F:alkaline phosphatase activity"/>
    <property type="evidence" value="ECO:0007669"/>
    <property type="project" value="UniProtKB-EC"/>
</dbReference>
<dbReference type="GO" id="GO:0090729">
    <property type="term" value="F:toxin activity"/>
    <property type="evidence" value="ECO:0007669"/>
    <property type="project" value="UniProtKB-KW"/>
</dbReference>
<organism>
    <name type="scientific">Deinagkistrodon acutus</name>
    <name type="common">Hundred-pace snake</name>
    <name type="synonym">Agkistrodon acutus</name>
    <dbReference type="NCBI Taxonomy" id="36307"/>
    <lineage>
        <taxon>Eukaryota</taxon>
        <taxon>Metazoa</taxon>
        <taxon>Chordata</taxon>
        <taxon>Craniata</taxon>
        <taxon>Vertebrata</taxon>
        <taxon>Euteleostomi</taxon>
        <taxon>Lepidosauria</taxon>
        <taxon>Squamata</taxon>
        <taxon>Bifurcata</taxon>
        <taxon>Unidentata</taxon>
        <taxon>Episquamata</taxon>
        <taxon>Toxicofera</taxon>
        <taxon>Serpentes</taxon>
        <taxon>Colubroidea</taxon>
        <taxon>Viperidae</taxon>
        <taxon>Crotalinae</taxon>
        <taxon>Deinagkistrodon</taxon>
    </lineage>
</organism>
<comment type="function">
    <text evidence="1">Has hemorrhagic activity.</text>
</comment>
<comment type="catalytic activity">
    <reaction evidence="1">
        <text>a phosphate monoester + H2O = an alcohol + phosphate</text>
        <dbReference type="Rhea" id="RHEA:15017"/>
        <dbReference type="ChEBI" id="CHEBI:15377"/>
        <dbReference type="ChEBI" id="CHEBI:30879"/>
        <dbReference type="ChEBI" id="CHEBI:43474"/>
        <dbReference type="ChEBI" id="CHEBI:67140"/>
        <dbReference type="EC" id="3.1.3.1"/>
    </reaction>
</comment>
<comment type="subcellular location">
    <subcellularLocation>
        <location evidence="1">Secreted</location>
    </subcellularLocation>
</comment>
<comment type="tissue specificity">
    <text evidence="1">Expressed by the venom gland.</text>
</comment>
<reference evidence="3" key="1">
    <citation type="submission" date="2009-07" db="UniProtKB">
        <title>Purification and characterization of an alkaline phosphatase from Deinagkistrodon acutus snake venom.</title>
        <authorList>
            <person name="Kong T."/>
            <person name="Tang Y."/>
            <person name="Dong W."/>
            <person name="Zhong W."/>
            <person name="Cui C."/>
            <person name="Huang S."/>
        </authorList>
    </citation>
    <scope>PROTEIN SEQUENCE</scope>
    <scope>FUNCTION</scope>
    <scope>CATALYTIC ACTIVITY</scope>
    <scope>SUBCELLULAR LOCATION</scope>
    <scope>TISSUE SPECIFICITY</scope>
    <source>
        <tissue evidence="1">Venom</tissue>
    </source>
</reference>
<name>ALPH_DEIAC</name>
<evidence type="ECO:0000269" key="1">
    <source ref="1"/>
</evidence>
<evidence type="ECO:0000303" key="2">
    <source ref="1"/>
</evidence>
<evidence type="ECO:0000305" key="3"/>
<proteinExistence type="evidence at protein level"/>